<accession>P46096</accession>
<gene>
    <name evidence="16" type="primary">Syt1</name>
</gene>
<evidence type="ECO:0000250" key="1"/>
<evidence type="ECO:0000250" key="2">
    <source>
        <dbReference type="UniProtKB" id="P21579"/>
    </source>
</evidence>
<evidence type="ECO:0000250" key="3">
    <source>
        <dbReference type="UniProtKB" id="P21707"/>
    </source>
</evidence>
<evidence type="ECO:0000250" key="4">
    <source>
        <dbReference type="UniProtKB" id="P48018"/>
    </source>
</evidence>
<evidence type="ECO:0000255" key="5"/>
<evidence type="ECO:0000255" key="6">
    <source>
        <dbReference type="PROSITE-ProRule" id="PRU00041"/>
    </source>
</evidence>
<evidence type="ECO:0000256" key="7">
    <source>
        <dbReference type="SAM" id="MobiDB-lite"/>
    </source>
</evidence>
<evidence type="ECO:0000269" key="8">
    <source>
    </source>
</evidence>
<evidence type="ECO:0000269" key="9">
    <source>
    </source>
</evidence>
<evidence type="ECO:0000269" key="10">
    <source>
    </source>
</evidence>
<evidence type="ECO:0000269" key="11">
    <source>
    </source>
</evidence>
<evidence type="ECO:0000269" key="12">
    <source>
    </source>
</evidence>
<evidence type="ECO:0000269" key="13">
    <source>
    </source>
</evidence>
<evidence type="ECO:0000303" key="14">
    <source>
    </source>
</evidence>
<evidence type="ECO:0000305" key="15"/>
<evidence type="ECO:0000312" key="16">
    <source>
        <dbReference type="MGI" id="MGI:99667"/>
    </source>
</evidence>
<evidence type="ECO:0007744" key="17">
    <source>
    </source>
</evidence>
<evidence type="ECO:0007744" key="18">
    <source>
    </source>
</evidence>
<evidence type="ECO:0007829" key="19">
    <source>
        <dbReference type="PDB" id="5VFE"/>
    </source>
</evidence>
<evidence type="ECO:0007829" key="20">
    <source>
        <dbReference type="PDB" id="5VFF"/>
    </source>
</evidence>
<proteinExistence type="evidence at protein level"/>
<name>SYT1_MOUSE</name>
<dbReference type="EMBL" id="D37792">
    <property type="protein sequence ID" value="BAA07040.1"/>
    <property type="molecule type" value="mRNA"/>
</dbReference>
<dbReference type="EMBL" id="AK078790">
    <property type="protein sequence ID" value="BAC37395.1"/>
    <property type="molecule type" value="mRNA"/>
</dbReference>
<dbReference type="EMBL" id="BC042519">
    <property type="protein sequence ID" value="AAH42519.1"/>
    <property type="molecule type" value="mRNA"/>
</dbReference>
<dbReference type="CCDS" id="CCDS24163.1"/>
<dbReference type="RefSeq" id="NP_001239270.1">
    <property type="nucleotide sequence ID" value="NM_001252341.1"/>
</dbReference>
<dbReference type="RefSeq" id="NP_001239271.1">
    <property type="nucleotide sequence ID" value="NM_001252342.1"/>
</dbReference>
<dbReference type="RefSeq" id="NP_001345431.1">
    <property type="nucleotide sequence ID" value="NM_001358502.1"/>
</dbReference>
<dbReference type="RefSeq" id="NP_001345432.1">
    <property type="nucleotide sequence ID" value="NM_001358503.1"/>
</dbReference>
<dbReference type="RefSeq" id="NP_033332.1">
    <property type="nucleotide sequence ID" value="NM_009306.3"/>
</dbReference>
<dbReference type="RefSeq" id="XP_006513509.1">
    <property type="nucleotide sequence ID" value="XM_006513446.1"/>
</dbReference>
<dbReference type="RefSeq" id="XP_006513510.1">
    <property type="nucleotide sequence ID" value="XM_006513447.2"/>
</dbReference>
<dbReference type="RefSeq" id="XP_006513511.1">
    <property type="nucleotide sequence ID" value="XM_006513448.1"/>
</dbReference>
<dbReference type="RefSeq" id="XP_017169355.1">
    <property type="nucleotide sequence ID" value="XM_017313866.1"/>
</dbReference>
<dbReference type="RefSeq" id="XP_030100844.1">
    <property type="nucleotide sequence ID" value="XM_030244984.2"/>
</dbReference>
<dbReference type="RefSeq" id="XP_030100845.1">
    <property type="nucleotide sequence ID" value="XM_030244985.2"/>
</dbReference>
<dbReference type="RefSeq" id="XP_030100846.1">
    <property type="nucleotide sequence ID" value="XM_030244986.2"/>
</dbReference>
<dbReference type="PDB" id="5T0R">
    <property type="method" value="X-ray"/>
    <property type="resolution" value="1.95 A"/>
    <property type="chains" value="A=140-265"/>
</dbReference>
<dbReference type="PDB" id="5T0S">
    <property type="method" value="X-ray"/>
    <property type="resolution" value="1.42 A"/>
    <property type="chains" value="A=271-421"/>
</dbReference>
<dbReference type="PDB" id="5VFE">
    <property type="method" value="X-ray"/>
    <property type="resolution" value="1.38 A"/>
    <property type="chains" value="A/B=140-265"/>
</dbReference>
<dbReference type="PDB" id="5VFF">
    <property type="method" value="X-ray"/>
    <property type="resolution" value="1.41 A"/>
    <property type="chains" value="A=271-421"/>
</dbReference>
<dbReference type="PDB" id="5VFG">
    <property type="method" value="X-ray"/>
    <property type="resolution" value="1.82 A"/>
    <property type="chains" value="A=271-421"/>
</dbReference>
<dbReference type="PDBsum" id="5T0R"/>
<dbReference type="PDBsum" id="5T0S"/>
<dbReference type="PDBsum" id="5VFE"/>
<dbReference type="PDBsum" id="5VFF"/>
<dbReference type="PDBsum" id="5VFG"/>
<dbReference type="SMR" id="P46096"/>
<dbReference type="BioGRID" id="203611">
    <property type="interactions" value="28"/>
</dbReference>
<dbReference type="DIP" id="DIP-31322N"/>
<dbReference type="FunCoup" id="P46096">
    <property type="interactions" value="1256"/>
</dbReference>
<dbReference type="IntAct" id="P46096">
    <property type="interactions" value="21"/>
</dbReference>
<dbReference type="MINT" id="P46096"/>
<dbReference type="STRING" id="10090.ENSMUSP00000100912"/>
<dbReference type="TCDB" id="9.A.48.1.1">
    <property type="family name" value="the unconventional protein secretion (ups) system family"/>
</dbReference>
<dbReference type="GlyConnect" id="2750">
    <property type="glycosylation" value="6 N-Linked glycans (1 site)"/>
</dbReference>
<dbReference type="GlyCosmos" id="P46096">
    <property type="glycosylation" value="1 site, 6 glycans"/>
</dbReference>
<dbReference type="GlyGen" id="P46096">
    <property type="glycosylation" value="6 sites, 9 N-linked glycans (3 sites), 1 O-linked glycan (1 site)"/>
</dbReference>
<dbReference type="iPTMnet" id="P46096"/>
<dbReference type="PhosphoSitePlus" id="P46096"/>
<dbReference type="SwissPalm" id="P46096"/>
<dbReference type="PaxDb" id="10090-ENSMUSP00000100912"/>
<dbReference type="ProteomicsDB" id="253445"/>
<dbReference type="Antibodypedia" id="1609">
    <property type="antibodies" value="843 antibodies from 43 providers"/>
</dbReference>
<dbReference type="DNASU" id="20979"/>
<dbReference type="Ensembl" id="ENSMUST00000064054.14">
    <property type="protein sequence ID" value="ENSMUSP00000063293.8"/>
    <property type="gene ID" value="ENSMUSG00000035864.15"/>
</dbReference>
<dbReference type="Ensembl" id="ENSMUST00000105276.8">
    <property type="protein sequence ID" value="ENSMUSP00000100912.2"/>
    <property type="gene ID" value="ENSMUSG00000035864.15"/>
</dbReference>
<dbReference type="GeneID" id="20979"/>
<dbReference type="KEGG" id="mmu:20979"/>
<dbReference type="UCSC" id="uc007gzg.2">
    <property type="organism name" value="mouse"/>
</dbReference>
<dbReference type="AGR" id="MGI:99667"/>
<dbReference type="CTD" id="6857"/>
<dbReference type="MGI" id="MGI:99667">
    <property type="gene designation" value="Syt1"/>
</dbReference>
<dbReference type="VEuPathDB" id="HostDB:ENSMUSG00000035864"/>
<dbReference type="eggNOG" id="KOG1028">
    <property type="taxonomic scope" value="Eukaryota"/>
</dbReference>
<dbReference type="GeneTree" id="ENSGT00940000155394"/>
<dbReference type="HOGENOM" id="CLU_023008_0_1_1"/>
<dbReference type="InParanoid" id="P46096"/>
<dbReference type="OMA" id="DVGGLSX"/>
<dbReference type="OrthoDB" id="67700at2759"/>
<dbReference type="PhylomeDB" id="P46096"/>
<dbReference type="TreeFam" id="TF315600"/>
<dbReference type="Reactome" id="R-MMU-181429">
    <property type="pathway name" value="Serotonin Neurotransmitter Release Cycle"/>
</dbReference>
<dbReference type="Reactome" id="R-MMU-181430">
    <property type="pathway name" value="Norepinephrine Neurotransmitter Release Cycle"/>
</dbReference>
<dbReference type="Reactome" id="R-MMU-210500">
    <property type="pathway name" value="Glutamate Neurotransmitter Release Cycle"/>
</dbReference>
<dbReference type="Reactome" id="R-MMU-212676">
    <property type="pathway name" value="Dopamine Neurotransmitter Release Cycle"/>
</dbReference>
<dbReference type="Reactome" id="R-MMU-264642">
    <property type="pathway name" value="Acetylcholine Neurotransmitter Release Cycle"/>
</dbReference>
<dbReference type="Reactome" id="R-MMU-8856825">
    <property type="pathway name" value="Cargo recognition for clathrin-mediated endocytosis"/>
</dbReference>
<dbReference type="Reactome" id="R-MMU-8856828">
    <property type="pathway name" value="Clathrin-mediated endocytosis"/>
</dbReference>
<dbReference type="Reactome" id="R-MMU-888590">
    <property type="pathway name" value="GABA synthesis, release, reuptake and degradation"/>
</dbReference>
<dbReference type="BioGRID-ORCS" id="20979">
    <property type="hits" value="1 hit in 79 CRISPR screens"/>
</dbReference>
<dbReference type="CD-CODE" id="CE726F99">
    <property type="entry name" value="Postsynaptic density"/>
</dbReference>
<dbReference type="ChiTaRS" id="Syt1">
    <property type="organism name" value="mouse"/>
</dbReference>
<dbReference type="PRO" id="PR:P46096"/>
<dbReference type="Proteomes" id="UP000000589">
    <property type="component" value="Chromosome 10"/>
</dbReference>
<dbReference type="RNAct" id="P46096">
    <property type="molecule type" value="protein"/>
</dbReference>
<dbReference type="Bgee" id="ENSMUSG00000035864">
    <property type="expression patterns" value="Expressed in medial dorsal nucleus of thalamus and 196 other cell types or tissues"/>
</dbReference>
<dbReference type="ExpressionAtlas" id="P46096">
    <property type="expression patterns" value="baseline and differential"/>
</dbReference>
<dbReference type="GO" id="GO:0030424">
    <property type="term" value="C:axon"/>
    <property type="evidence" value="ECO:0000314"/>
    <property type="project" value="ParkinsonsUK-UCL"/>
</dbReference>
<dbReference type="GO" id="GO:0042584">
    <property type="term" value="C:chromaffin granule membrane"/>
    <property type="evidence" value="ECO:0007669"/>
    <property type="project" value="UniProtKB-SubCell"/>
</dbReference>
<dbReference type="GO" id="GO:0005737">
    <property type="term" value="C:cytoplasm"/>
    <property type="evidence" value="ECO:0000266"/>
    <property type="project" value="MGI"/>
</dbReference>
<dbReference type="GO" id="GO:0031045">
    <property type="term" value="C:dense core granule"/>
    <property type="evidence" value="ECO:0000314"/>
    <property type="project" value="ParkinsonsUK-UCL"/>
</dbReference>
<dbReference type="GO" id="GO:0060076">
    <property type="term" value="C:excitatory synapse"/>
    <property type="evidence" value="ECO:0007669"/>
    <property type="project" value="Ensembl"/>
</dbReference>
<dbReference type="GO" id="GO:0098978">
    <property type="term" value="C:glutamatergic synapse"/>
    <property type="evidence" value="ECO:0000314"/>
    <property type="project" value="SynGO"/>
</dbReference>
<dbReference type="GO" id="GO:0005794">
    <property type="term" value="C:Golgi apparatus"/>
    <property type="evidence" value="ECO:0000314"/>
    <property type="project" value="MGI"/>
</dbReference>
<dbReference type="GO" id="GO:0098686">
    <property type="term" value="C:hippocampal mossy fiber to CA3 synapse"/>
    <property type="evidence" value="ECO:0007669"/>
    <property type="project" value="Ensembl"/>
</dbReference>
<dbReference type="GO" id="GO:0043005">
    <property type="term" value="C:neuron projection"/>
    <property type="evidence" value="ECO:0000314"/>
    <property type="project" value="ParkinsonsUK-UCL"/>
</dbReference>
<dbReference type="GO" id="GO:0044306">
    <property type="term" value="C:neuron projection terminus"/>
    <property type="evidence" value="ECO:0007669"/>
    <property type="project" value="Ensembl"/>
</dbReference>
<dbReference type="GO" id="GO:0005886">
    <property type="term" value="C:plasma membrane"/>
    <property type="evidence" value="ECO:0000304"/>
    <property type="project" value="UniProtKB"/>
</dbReference>
<dbReference type="GO" id="GO:0099524">
    <property type="term" value="C:postsynaptic cytosol"/>
    <property type="evidence" value="ECO:0007669"/>
    <property type="project" value="Ensembl"/>
</dbReference>
<dbReference type="GO" id="GO:0014069">
    <property type="term" value="C:postsynaptic density"/>
    <property type="evidence" value="ECO:0007669"/>
    <property type="project" value="Ensembl"/>
</dbReference>
<dbReference type="GO" id="GO:0045211">
    <property type="term" value="C:postsynaptic membrane"/>
    <property type="evidence" value="ECO:0007669"/>
    <property type="project" value="Ensembl"/>
</dbReference>
<dbReference type="GO" id="GO:0048786">
    <property type="term" value="C:presynaptic active zone"/>
    <property type="evidence" value="ECO:0007669"/>
    <property type="project" value="Ensembl"/>
</dbReference>
<dbReference type="GO" id="GO:0099523">
    <property type="term" value="C:presynaptic cytosol"/>
    <property type="evidence" value="ECO:0007669"/>
    <property type="project" value="Ensembl"/>
</dbReference>
<dbReference type="GO" id="GO:0042734">
    <property type="term" value="C:presynaptic membrane"/>
    <property type="evidence" value="ECO:0000314"/>
    <property type="project" value="MGI"/>
</dbReference>
<dbReference type="GO" id="GO:0030141">
    <property type="term" value="C:secretory granule"/>
    <property type="evidence" value="ECO:0000314"/>
    <property type="project" value="MGI"/>
</dbReference>
<dbReference type="GO" id="GO:0008021">
    <property type="term" value="C:synaptic vesicle"/>
    <property type="evidence" value="ECO:0000314"/>
    <property type="project" value="MGI"/>
</dbReference>
<dbReference type="GO" id="GO:0030672">
    <property type="term" value="C:synaptic vesicle membrane"/>
    <property type="evidence" value="ECO:0000314"/>
    <property type="project" value="MGI"/>
</dbReference>
<dbReference type="GO" id="GO:0005509">
    <property type="term" value="F:calcium ion binding"/>
    <property type="evidence" value="ECO:0000314"/>
    <property type="project" value="MGI"/>
</dbReference>
<dbReference type="GO" id="GO:0061891">
    <property type="term" value="F:calcium ion sensor activity"/>
    <property type="evidence" value="ECO:0000314"/>
    <property type="project" value="MGI"/>
</dbReference>
<dbReference type="GO" id="GO:0005544">
    <property type="term" value="F:calcium-dependent phospholipid binding"/>
    <property type="evidence" value="ECO:0000314"/>
    <property type="project" value="ParkinsonsUK-UCL"/>
</dbReference>
<dbReference type="GO" id="GO:0048306">
    <property type="term" value="F:calcium-dependent protein binding"/>
    <property type="evidence" value="ECO:0000353"/>
    <property type="project" value="HGNC-UCL"/>
</dbReference>
<dbReference type="GO" id="GO:0005516">
    <property type="term" value="F:calmodulin binding"/>
    <property type="evidence" value="ECO:0007669"/>
    <property type="project" value="Ensembl"/>
</dbReference>
<dbReference type="GO" id="GO:0030276">
    <property type="term" value="F:clathrin binding"/>
    <property type="evidence" value="ECO:0007669"/>
    <property type="project" value="Ensembl"/>
</dbReference>
<dbReference type="GO" id="GO:0042802">
    <property type="term" value="F:identical protein binding"/>
    <property type="evidence" value="ECO:0007669"/>
    <property type="project" value="Ensembl"/>
</dbReference>
<dbReference type="GO" id="GO:0050750">
    <property type="term" value="F:low-density lipoprotein particle receptor binding"/>
    <property type="evidence" value="ECO:0000266"/>
    <property type="project" value="MGI"/>
</dbReference>
<dbReference type="GO" id="GO:0140693">
    <property type="term" value="F:molecular condensate scaffold activity"/>
    <property type="evidence" value="ECO:0007669"/>
    <property type="project" value="Ensembl"/>
</dbReference>
<dbReference type="GO" id="GO:0005546">
    <property type="term" value="F:phosphatidylinositol-4,5-bisphosphate binding"/>
    <property type="evidence" value="ECO:0007669"/>
    <property type="project" value="Ensembl"/>
</dbReference>
<dbReference type="GO" id="GO:0001786">
    <property type="term" value="F:phosphatidylserine binding"/>
    <property type="evidence" value="ECO:0007669"/>
    <property type="project" value="Ensembl"/>
</dbReference>
<dbReference type="GO" id="GO:0046982">
    <property type="term" value="F:protein heterodimerization activity"/>
    <property type="evidence" value="ECO:0007669"/>
    <property type="project" value="Ensembl"/>
</dbReference>
<dbReference type="GO" id="GO:0000149">
    <property type="term" value="F:SNARE binding"/>
    <property type="evidence" value="ECO:0000250"/>
    <property type="project" value="ParkinsonsUK-UCL"/>
</dbReference>
<dbReference type="GO" id="GO:0017075">
    <property type="term" value="F:syntaxin-1 binding"/>
    <property type="evidence" value="ECO:0000314"/>
    <property type="project" value="ParkinsonsUK-UCL"/>
</dbReference>
<dbReference type="GO" id="GO:0030348">
    <property type="term" value="F:syntaxin-3 binding"/>
    <property type="evidence" value="ECO:0007669"/>
    <property type="project" value="Ensembl"/>
</dbReference>
<dbReference type="GO" id="GO:0048791">
    <property type="term" value="P:calcium ion-regulated exocytosis of neurotransmitter"/>
    <property type="evidence" value="ECO:0000315"/>
    <property type="project" value="MGI"/>
</dbReference>
<dbReference type="GO" id="GO:0099502">
    <property type="term" value="P:calcium-dependent activation of synaptic vesicle fusion"/>
    <property type="evidence" value="ECO:0000314"/>
    <property type="project" value="SynGO"/>
</dbReference>
<dbReference type="GO" id="GO:0030154">
    <property type="term" value="P:cell differentiation"/>
    <property type="evidence" value="ECO:0007669"/>
    <property type="project" value="UniProtKB-KW"/>
</dbReference>
<dbReference type="GO" id="GO:0071277">
    <property type="term" value="P:cellular response to calcium ion"/>
    <property type="evidence" value="ECO:0000250"/>
    <property type="project" value="ParkinsonsUK-UCL"/>
</dbReference>
<dbReference type="GO" id="GO:0005513">
    <property type="term" value="P:detection of calcium ion"/>
    <property type="evidence" value="ECO:0007669"/>
    <property type="project" value="Ensembl"/>
</dbReference>
<dbReference type="GO" id="GO:0098746">
    <property type="term" value="P:fast, calcium ion-dependent exocytosis of neurotransmitter"/>
    <property type="evidence" value="ECO:0000314"/>
    <property type="project" value="ParkinsonsUK-UCL"/>
</dbReference>
<dbReference type="GO" id="GO:0140694">
    <property type="term" value="P:membraneless organelle assembly"/>
    <property type="evidence" value="ECO:0007669"/>
    <property type="project" value="Ensembl"/>
</dbReference>
<dbReference type="GO" id="GO:0007269">
    <property type="term" value="P:neurotransmitter secretion"/>
    <property type="evidence" value="ECO:0000314"/>
    <property type="project" value="MGI"/>
</dbReference>
<dbReference type="GO" id="GO:1903235">
    <property type="term" value="P:positive regulation of calcium ion-dependent exocytosis of neurotransmitter"/>
    <property type="evidence" value="ECO:0000315"/>
    <property type="project" value="UniProtKB"/>
</dbReference>
<dbReference type="GO" id="GO:1903861">
    <property type="term" value="P:positive regulation of dendrite extension"/>
    <property type="evidence" value="ECO:0007669"/>
    <property type="project" value="Ensembl"/>
</dbReference>
<dbReference type="GO" id="GO:0033603">
    <property type="term" value="P:positive regulation of dopamine secretion"/>
    <property type="evidence" value="ECO:0007669"/>
    <property type="project" value="Ensembl"/>
</dbReference>
<dbReference type="GO" id="GO:0050806">
    <property type="term" value="P:positive regulation of synaptic transmission"/>
    <property type="evidence" value="ECO:0000315"/>
    <property type="project" value="ParkinsonsUK-UCL"/>
</dbReference>
<dbReference type="GO" id="GO:0051291">
    <property type="term" value="P:protein heterooligomerization"/>
    <property type="evidence" value="ECO:0007669"/>
    <property type="project" value="Ensembl"/>
</dbReference>
<dbReference type="GO" id="GO:0017158">
    <property type="term" value="P:regulation of calcium ion-dependent exocytosis"/>
    <property type="evidence" value="ECO:0000315"/>
    <property type="project" value="CACAO"/>
</dbReference>
<dbReference type="GO" id="GO:0014059">
    <property type="term" value="P:regulation of dopamine secretion"/>
    <property type="evidence" value="ECO:0000315"/>
    <property type="project" value="ParkinsonsUK-UCL"/>
</dbReference>
<dbReference type="GO" id="GO:1903305">
    <property type="term" value="P:regulation of regulated secretory pathway"/>
    <property type="evidence" value="ECO:0000250"/>
    <property type="project" value="ParkinsonsUK-UCL"/>
</dbReference>
<dbReference type="GO" id="GO:0051966">
    <property type="term" value="P:regulation of synaptic transmission, glutamatergic"/>
    <property type="evidence" value="ECO:0000315"/>
    <property type="project" value="ParkinsonsUK-UCL"/>
</dbReference>
<dbReference type="GO" id="GO:0061669">
    <property type="term" value="P:spontaneous neurotransmitter secretion"/>
    <property type="evidence" value="ECO:0000315"/>
    <property type="project" value="MGI"/>
</dbReference>
<dbReference type="GO" id="GO:0016079">
    <property type="term" value="P:synaptic vesicle exocytosis"/>
    <property type="evidence" value="ECO:0000315"/>
    <property type="project" value="MGI"/>
</dbReference>
<dbReference type="GO" id="GO:0071911">
    <property type="term" value="P:synchronous neurotransmitter secretion"/>
    <property type="evidence" value="ECO:0000315"/>
    <property type="project" value="MGI"/>
</dbReference>
<dbReference type="GO" id="GO:0048278">
    <property type="term" value="P:vesicle docking"/>
    <property type="evidence" value="ECO:0007669"/>
    <property type="project" value="Ensembl"/>
</dbReference>
<dbReference type="GO" id="GO:0006906">
    <property type="term" value="P:vesicle fusion"/>
    <property type="evidence" value="ECO:0007669"/>
    <property type="project" value="Ensembl"/>
</dbReference>
<dbReference type="CDD" id="cd08385">
    <property type="entry name" value="C2A_Synaptotagmin-1-5-6-9-10"/>
    <property type="match status" value="1"/>
</dbReference>
<dbReference type="CDD" id="cd08402">
    <property type="entry name" value="C2B_Synaptotagmin-1"/>
    <property type="match status" value="1"/>
</dbReference>
<dbReference type="CDD" id="cd21963">
    <property type="entry name" value="Syt1_N"/>
    <property type="match status" value="1"/>
</dbReference>
<dbReference type="FunFam" id="2.60.40.150:FF:000007">
    <property type="entry name" value="Synaptotagmin 1"/>
    <property type="match status" value="1"/>
</dbReference>
<dbReference type="FunFam" id="2.60.40.150:FF:000016">
    <property type="entry name" value="Synaptotagmin 1"/>
    <property type="match status" value="1"/>
</dbReference>
<dbReference type="Gene3D" id="2.60.40.150">
    <property type="entry name" value="C2 domain"/>
    <property type="match status" value="2"/>
</dbReference>
<dbReference type="InterPro" id="IPR000008">
    <property type="entry name" value="C2_dom"/>
</dbReference>
<dbReference type="InterPro" id="IPR035892">
    <property type="entry name" value="C2_domain_sf"/>
</dbReference>
<dbReference type="InterPro" id="IPR001565">
    <property type="entry name" value="Synaptotagmin"/>
</dbReference>
<dbReference type="PANTHER" id="PTHR10024">
    <property type="entry name" value="SYNAPTOTAGMIN"/>
    <property type="match status" value="1"/>
</dbReference>
<dbReference type="PANTHER" id="PTHR10024:SF239">
    <property type="entry name" value="SYNAPTOTAGMIN-1"/>
    <property type="match status" value="1"/>
</dbReference>
<dbReference type="Pfam" id="PF00168">
    <property type="entry name" value="C2"/>
    <property type="match status" value="2"/>
</dbReference>
<dbReference type="PRINTS" id="PR00360">
    <property type="entry name" value="C2DOMAIN"/>
</dbReference>
<dbReference type="PRINTS" id="PR00399">
    <property type="entry name" value="SYNAPTOTAGMN"/>
</dbReference>
<dbReference type="SMART" id="SM00239">
    <property type="entry name" value="C2"/>
    <property type="match status" value="2"/>
</dbReference>
<dbReference type="SUPFAM" id="SSF49562">
    <property type="entry name" value="C2 domain (Calcium/lipid-binding domain, CaLB)"/>
    <property type="match status" value="2"/>
</dbReference>
<dbReference type="PROSITE" id="PS50004">
    <property type="entry name" value="C2"/>
    <property type="match status" value="2"/>
</dbReference>
<organism>
    <name type="scientific">Mus musculus</name>
    <name type="common">Mouse</name>
    <dbReference type="NCBI Taxonomy" id="10090"/>
    <lineage>
        <taxon>Eukaryota</taxon>
        <taxon>Metazoa</taxon>
        <taxon>Chordata</taxon>
        <taxon>Craniata</taxon>
        <taxon>Vertebrata</taxon>
        <taxon>Euteleostomi</taxon>
        <taxon>Mammalia</taxon>
        <taxon>Eutheria</taxon>
        <taxon>Euarchontoglires</taxon>
        <taxon>Glires</taxon>
        <taxon>Rodentia</taxon>
        <taxon>Myomorpha</taxon>
        <taxon>Muroidea</taxon>
        <taxon>Muridae</taxon>
        <taxon>Murinae</taxon>
        <taxon>Mus</taxon>
        <taxon>Mus</taxon>
    </lineage>
</organism>
<feature type="chain" id="PRO_0000183938" description="Synaptotagmin-1">
    <location>
        <begin position="1"/>
        <end position="421"/>
    </location>
</feature>
<feature type="topological domain" description="Vesicular" evidence="5">
    <location>
        <begin position="1"/>
        <end position="57"/>
    </location>
</feature>
<feature type="transmembrane region" description="Helical" evidence="5">
    <location>
        <begin position="58"/>
        <end position="79"/>
    </location>
</feature>
<feature type="topological domain" description="Cytoplasmic" evidence="5">
    <location>
        <begin position="80"/>
        <end position="421"/>
    </location>
</feature>
<feature type="domain" description="C2 1" evidence="6">
    <location>
        <begin position="141"/>
        <end position="260"/>
    </location>
</feature>
<feature type="domain" description="C2 2" evidence="6">
    <location>
        <begin position="272"/>
        <end position="405"/>
    </location>
</feature>
<feature type="region of interest" description="Disordered" evidence="7">
    <location>
        <begin position="112"/>
        <end position="141"/>
    </location>
</feature>
<feature type="region of interest" description="Phospholipid binding" evidence="15">
    <location>
        <begin position="135"/>
        <end position="381"/>
    </location>
</feature>
<feature type="compositionally biased region" description="Acidic residues" evidence="7">
    <location>
        <begin position="121"/>
        <end position="133"/>
    </location>
</feature>
<feature type="binding site" evidence="6">
    <location>
        <position position="171"/>
    </location>
    <ligand>
        <name>Ca(2+)</name>
        <dbReference type="ChEBI" id="CHEBI:29108"/>
        <label>2</label>
    </ligand>
</feature>
<feature type="binding site" evidence="6">
    <location>
        <position position="172"/>
    </location>
    <ligand>
        <name>Ca(2+)</name>
        <dbReference type="ChEBI" id="CHEBI:29108"/>
        <label>1</label>
    </ligand>
</feature>
<feature type="binding site" evidence="6">
    <location>
        <position position="172"/>
    </location>
    <ligand>
        <name>Ca(2+)</name>
        <dbReference type="ChEBI" id="CHEBI:29108"/>
        <label>2</label>
    </ligand>
</feature>
<feature type="binding site" evidence="6">
    <location>
        <position position="178"/>
    </location>
    <ligand>
        <name>Ca(2+)</name>
        <dbReference type="ChEBI" id="CHEBI:29108"/>
        <label>1</label>
    </ligand>
</feature>
<feature type="binding site" evidence="6">
    <location>
        <position position="230"/>
    </location>
    <ligand>
        <name>Ca(2+)</name>
        <dbReference type="ChEBI" id="CHEBI:29108"/>
        <label>1</label>
    </ligand>
</feature>
<feature type="binding site" evidence="6">
    <location>
        <position position="230"/>
    </location>
    <ligand>
        <name>Ca(2+)</name>
        <dbReference type="ChEBI" id="CHEBI:29108"/>
        <label>2</label>
    </ligand>
</feature>
<feature type="binding site" evidence="6">
    <location>
        <position position="231"/>
    </location>
    <ligand>
        <name>Ca(2+)</name>
        <dbReference type="ChEBI" id="CHEBI:29108"/>
        <label>1</label>
    </ligand>
</feature>
<feature type="binding site" evidence="6">
    <location>
        <position position="232"/>
    </location>
    <ligand>
        <name>Ca(2+)</name>
        <dbReference type="ChEBI" id="CHEBI:29108"/>
        <label>1</label>
    </ligand>
</feature>
<feature type="binding site" evidence="6">
    <location>
        <position position="232"/>
    </location>
    <ligand>
        <name>Ca(2+)</name>
        <dbReference type="ChEBI" id="CHEBI:29108"/>
        <label>2</label>
    </ligand>
</feature>
<feature type="binding site" evidence="6">
    <location>
        <position position="232"/>
    </location>
    <ligand>
        <name>Ca(2+)</name>
        <dbReference type="ChEBI" id="CHEBI:29108"/>
        <label>3</label>
    </ligand>
</feature>
<feature type="binding site" evidence="6">
    <location>
        <position position="235"/>
    </location>
    <ligand>
        <name>Ca(2+)</name>
        <dbReference type="ChEBI" id="CHEBI:29108"/>
        <label>3</label>
    </ligand>
</feature>
<feature type="binding site" evidence="6">
    <location>
        <position position="236"/>
    </location>
    <ligand>
        <name>Ca(2+)</name>
        <dbReference type="ChEBI" id="CHEBI:29108"/>
        <label>3</label>
    </ligand>
</feature>
<feature type="binding site" evidence="6">
    <location>
        <position position="238"/>
    </location>
    <ligand>
        <name>Ca(2+)</name>
        <dbReference type="ChEBI" id="CHEBI:29108"/>
        <label>2</label>
    </ligand>
</feature>
<feature type="binding site" evidence="6">
    <location>
        <position position="238"/>
    </location>
    <ligand>
        <name>Ca(2+)</name>
        <dbReference type="ChEBI" id="CHEBI:29108"/>
        <label>3</label>
    </ligand>
</feature>
<feature type="binding site" evidence="6">
    <location>
        <position position="303"/>
    </location>
    <ligand>
        <name>Ca(2+)</name>
        <dbReference type="ChEBI" id="CHEBI:29108"/>
        <label>4</label>
    </ligand>
</feature>
<feature type="binding site" evidence="6">
    <location>
        <position position="303"/>
    </location>
    <ligand>
        <name>Ca(2+)</name>
        <dbReference type="ChEBI" id="CHEBI:29108"/>
        <label>5</label>
    </ligand>
</feature>
<feature type="binding site" evidence="6">
    <location>
        <position position="309"/>
    </location>
    <ligand>
        <name>Ca(2+)</name>
        <dbReference type="ChEBI" id="CHEBI:29108"/>
        <label>4</label>
    </ligand>
</feature>
<feature type="binding site" evidence="6">
    <location>
        <position position="363"/>
    </location>
    <ligand>
        <name>Ca(2+)</name>
        <dbReference type="ChEBI" id="CHEBI:29108"/>
        <label>4</label>
    </ligand>
</feature>
<feature type="binding site" evidence="6">
    <location>
        <position position="363"/>
    </location>
    <ligand>
        <name>Ca(2+)</name>
        <dbReference type="ChEBI" id="CHEBI:29108"/>
        <label>5</label>
    </ligand>
</feature>
<feature type="binding site" evidence="6">
    <location>
        <position position="365"/>
    </location>
    <ligand>
        <name>Ca(2+)</name>
        <dbReference type="ChEBI" id="CHEBI:29108"/>
        <label>4</label>
    </ligand>
</feature>
<feature type="binding site" evidence="6">
    <location>
        <position position="365"/>
    </location>
    <ligand>
        <name>Ca(2+)</name>
        <dbReference type="ChEBI" id="CHEBI:29108"/>
        <label>5</label>
    </ligand>
</feature>
<feature type="binding site" evidence="6">
    <location>
        <position position="371"/>
    </location>
    <ligand>
        <name>Ca(2+)</name>
        <dbReference type="ChEBI" id="CHEBI:29108"/>
        <label>5</label>
    </ligand>
</feature>
<feature type="modified residue" description="Phosphothreonine" evidence="2">
    <location>
        <position position="128"/>
    </location>
</feature>
<feature type="modified residue" description="Phosphotyrosine" evidence="17">
    <location>
        <position position="229"/>
    </location>
</feature>
<feature type="modified residue" description="Phosphoserine" evidence="18">
    <location>
        <position position="264"/>
    </location>
</feature>
<feature type="modified residue" description="Phosphoserine" evidence="3">
    <location>
        <position position="342"/>
    </location>
</feature>
<feature type="modified residue" description="Phosphoserine" evidence="3">
    <location>
        <position position="344"/>
    </location>
</feature>
<feature type="lipid moiety-binding region" description="S-palmitoyl cysteine" evidence="3">
    <location>
        <position position="74"/>
    </location>
</feature>
<feature type="lipid moiety-binding region" description="S-palmitoyl cysteine" evidence="3">
    <location>
        <position position="75"/>
    </location>
</feature>
<feature type="lipid moiety-binding region" description="S-palmitoyl cysteine" evidence="3">
    <location>
        <position position="77"/>
    </location>
</feature>
<feature type="lipid moiety-binding region" description="S-palmitoyl cysteine" evidence="3">
    <location>
        <position position="79"/>
    </location>
</feature>
<feature type="lipid moiety-binding region" description="S-palmitoyl cysteine" evidence="3">
    <location>
        <position position="82"/>
    </location>
</feature>
<feature type="glycosylation site" description="N-linked (GlcNAc...) asparagine" evidence="1">
    <location>
        <position position="24"/>
    </location>
</feature>
<feature type="mutagenesis site" description="Reduces affinity for calcium and results in decreased calcium-dependent neurotransmitter release." evidence="8">
    <original>R</original>
    <variation>Q</variation>
    <location>
        <position position="233"/>
    </location>
</feature>
<feature type="mutagenesis site" description="No effect on calcium-dependent neurotransmitter release." evidence="8">
    <original>K</original>
    <variation>Q</variation>
    <location>
        <position position="236"/>
    </location>
</feature>
<feature type="strand" evidence="19">
    <location>
        <begin position="144"/>
        <end position="152"/>
    </location>
</feature>
<feature type="turn" evidence="19">
    <location>
        <begin position="153"/>
        <end position="156"/>
    </location>
</feature>
<feature type="strand" evidence="19">
    <location>
        <begin position="157"/>
        <end position="167"/>
    </location>
</feature>
<feature type="turn" evidence="19">
    <location>
        <begin position="173"/>
        <end position="175"/>
    </location>
</feature>
<feature type="strand" evidence="19">
    <location>
        <begin position="179"/>
        <end position="186"/>
    </location>
</feature>
<feature type="strand" evidence="19">
    <location>
        <begin position="188"/>
        <end position="194"/>
    </location>
</feature>
<feature type="strand" evidence="19">
    <location>
        <begin position="205"/>
        <end position="213"/>
    </location>
</feature>
<feature type="helix" evidence="19">
    <location>
        <begin position="216"/>
        <end position="221"/>
    </location>
</feature>
<feature type="strand" evidence="19">
    <location>
        <begin position="223"/>
        <end position="230"/>
    </location>
</feature>
<feature type="strand" evidence="19">
    <location>
        <begin position="233"/>
        <end position="235"/>
    </location>
</feature>
<feature type="strand" evidence="19">
    <location>
        <begin position="238"/>
        <end position="246"/>
    </location>
</feature>
<feature type="helix" evidence="19">
    <location>
        <begin position="247"/>
        <end position="249"/>
    </location>
</feature>
<feature type="strand" evidence="19">
    <location>
        <begin position="258"/>
        <end position="261"/>
    </location>
</feature>
<feature type="strand" evidence="20">
    <location>
        <begin position="275"/>
        <end position="283"/>
    </location>
</feature>
<feature type="turn" evidence="20">
    <location>
        <begin position="284"/>
        <end position="287"/>
    </location>
</feature>
<feature type="strand" evidence="20">
    <location>
        <begin position="288"/>
        <end position="298"/>
    </location>
</feature>
<feature type="strand" evidence="20">
    <location>
        <begin position="310"/>
        <end position="318"/>
    </location>
</feature>
<feature type="strand" evidence="20">
    <location>
        <begin position="321"/>
        <end position="327"/>
    </location>
</feature>
<feature type="strand" evidence="20">
    <location>
        <begin position="338"/>
        <end position="346"/>
    </location>
</feature>
<feature type="helix" evidence="20">
    <location>
        <begin position="349"/>
        <end position="351"/>
    </location>
</feature>
<feature type="strand" evidence="20">
    <location>
        <begin position="356"/>
        <end position="363"/>
    </location>
</feature>
<feature type="strand" evidence="20">
    <location>
        <begin position="366"/>
        <end position="368"/>
    </location>
</feature>
<feature type="strand" evidence="20">
    <location>
        <begin position="371"/>
        <end position="379"/>
    </location>
</feature>
<feature type="helix" evidence="20">
    <location>
        <begin position="384"/>
        <end position="395"/>
    </location>
</feature>
<feature type="strand" evidence="20">
    <location>
        <begin position="401"/>
        <end position="406"/>
    </location>
</feature>
<feature type="helix" evidence="20">
    <location>
        <begin position="410"/>
        <end position="417"/>
    </location>
</feature>
<protein>
    <recommendedName>
        <fullName evidence="3">Synaptotagmin-1</fullName>
    </recommendedName>
    <alternativeName>
        <fullName evidence="14">Synaptotagmin I</fullName>
        <shortName>SytI</shortName>
    </alternativeName>
    <alternativeName>
        <fullName evidence="3">p65</fullName>
    </alternativeName>
</protein>
<keyword id="KW-0002">3D-structure</keyword>
<keyword id="KW-0106">Calcium</keyword>
<keyword id="KW-0963">Cytoplasm</keyword>
<keyword id="KW-0968">Cytoplasmic vesicle</keyword>
<keyword id="KW-0221">Differentiation</keyword>
<keyword id="KW-0903">Direct protein sequencing</keyword>
<keyword id="KW-0325">Glycoprotein</keyword>
<keyword id="KW-0449">Lipoprotein</keyword>
<keyword id="KW-0472">Membrane</keyword>
<keyword id="KW-0479">Metal-binding</keyword>
<keyword id="KW-0564">Palmitate</keyword>
<keyword id="KW-0597">Phosphoprotein</keyword>
<keyword id="KW-1185">Reference proteome</keyword>
<keyword id="KW-0677">Repeat</keyword>
<keyword id="KW-0770">Synapse</keyword>
<keyword id="KW-0812">Transmembrane</keyword>
<keyword id="KW-1133">Transmembrane helix</keyword>
<sequence>MVSASRPEALAAPVTTVATLVPHNATEPASPGEGKEDAFSKLKQKFMNELHKIPLPPWALIAIAIVAVLLVVTCCFCVCKKCLFKKKNKKKGKEKGGKNAINMKDVKDLGKTMKDQALKDDDAETGLTDGEEKEEPKEEEKLGKLQYSLDYDFQNNQLLVGIIQAAELPALDMGGTSDPYVKVFLLPDKKKKFETKVHRKTLNPVFNEQFTFKVPYSELGGKTLVMAVYDFDRFSKHDIIGEFKVPMNTVDFGHVTEEWRDLQSAEKEEQEKLGDICFSLRYVPTAGKLTVVILEAKNLKKMDVGGLSDPYVKIHLMQNGKRLKKKKTTIKKNTLNPYYNESFSFEVPFEQIQKVQVVVTVLDYDKIGKNDAIGKVFVGYNSTGAELRHWSDMLANPRRPIAQWHTLQVEEEVDAMLAVKK</sequence>
<reference key="1">
    <citation type="journal article" date="1994" name="J. Biol. Chem.">
        <title>Inositol-1,3,4,5-tetrakisphosphate binding to C2B domain of IP4BP/synaptotagmin II.</title>
        <authorList>
            <person name="Fukuda M."/>
            <person name="Aruga J."/>
            <person name="Niinobe M."/>
            <person name="Aimoto S."/>
            <person name="Mikoshiba K."/>
        </authorList>
    </citation>
    <scope>NUCLEOTIDE SEQUENCE [MRNA]</scope>
</reference>
<reference key="2">
    <citation type="journal article" date="2005" name="Science">
        <title>The transcriptional landscape of the mammalian genome.</title>
        <authorList>
            <person name="Carninci P."/>
            <person name="Kasukawa T."/>
            <person name="Katayama S."/>
            <person name="Gough J."/>
            <person name="Frith M.C."/>
            <person name="Maeda N."/>
            <person name="Oyama R."/>
            <person name="Ravasi T."/>
            <person name="Lenhard B."/>
            <person name="Wells C."/>
            <person name="Kodzius R."/>
            <person name="Shimokawa K."/>
            <person name="Bajic V.B."/>
            <person name="Brenner S.E."/>
            <person name="Batalov S."/>
            <person name="Forrest A.R."/>
            <person name="Zavolan M."/>
            <person name="Davis M.J."/>
            <person name="Wilming L.G."/>
            <person name="Aidinis V."/>
            <person name="Allen J.E."/>
            <person name="Ambesi-Impiombato A."/>
            <person name="Apweiler R."/>
            <person name="Aturaliya R.N."/>
            <person name="Bailey T.L."/>
            <person name="Bansal M."/>
            <person name="Baxter L."/>
            <person name="Beisel K.W."/>
            <person name="Bersano T."/>
            <person name="Bono H."/>
            <person name="Chalk A.M."/>
            <person name="Chiu K.P."/>
            <person name="Choudhary V."/>
            <person name="Christoffels A."/>
            <person name="Clutterbuck D.R."/>
            <person name="Crowe M.L."/>
            <person name="Dalla E."/>
            <person name="Dalrymple B.P."/>
            <person name="de Bono B."/>
            <person name="Della Gatta G."/>
            <person name="di Bernardo D."/>
            <person name="Down T."/>
            <person name="Engstrom P."/>
            <person name="Fagiolini M."/>
            <person name="Faulkner G."/>
            <person name="Fletcher C.F."/>
            <person name="Fukushima T."/>
            <person name="Furuno M."/>
            <person name="Futaki S."/>
            <person name="Gariboldi M."/>
            <person name="Georgii-Hemming P."/>
            <person name="Gingeras T.R."/>
            <person name="Gojobori T."/>
            <person name="Green R.E."/>
            <person name="Gustincich S."/>
            <person name="Harbers M."/>
            <person name="Hayashi Y."/>
            <person name="Hensch T.K."/>
            <person name="Hirokawa N."/>
            <person name="Hill D."/>
            <person name="Huminiecki L."/>
            <person name="Iacono M."/>
            <person name="Ikeo K."/>
            <person name="Iwama A."/>
            <person name="Ishikawa T."/>
            <person name="Jakt M."/>
            <person name="Kanapin A."/>
            <person name="Katoh M."/>
            <person name="Kawasawa Y."/>
            <person name="Kelso J."/>
            <person name="Kitamura H."/>
            <person name="Kitano H."/>
            <person name="Kollias G."/>
            <person name="Krishnan S.P."/>
            <person name="Kruger A."/>
            <person name="Kummerfeld S.K."/>
            <person name="Kurochkin I.V."/>
            <person name="Lareau L.F."/>
            <person name="Lazarevic D."/>
            <person name="Lipovich L."/>
            <person name="Liu J."/>
            <person name="Liuni S."/>
            <person name="McWilliam S."/>
            <person name="Madan Babu M."/>
            <person name="Madera M."/>
            <person name="Marchionni L."/>
            <person name="Matsuda H."/>
            <person name="Matsuzawa S."/>
            <person name="Miki H."/>
            <person name="Mignone F."/>
            <person name="Miyake S."/>
            <person name="Morris K."/>
            <person name="Mottagui-Tabar S."/>
            <person name="Mulder N."/>
            <person name="Nakano N."/>
            <person name="Nakauchi H."/>
            <person name="Ng P."/>
            <person name="Nilsson R."/>
            <person name="Nishiguchi S."/>
            <person name="Nishikawa S."/>
            <person name="Nori F."/>
            <person name="Ohara O."/>
            <person name="Okazaki Y."/>
            <person name="Orlando V."/>
            <person name="Pang K.C."/>
            <person name="Pavan W.J."/>
            <person name="Pavesi G."/>
            <person name="Pesole G."/>
            <person name="Petrovsky N."/>
            <person name="Piazza S."/>
            <person name="Reed J."/>
            <person name="Reid J.F."/>
            <person name="Ring B.Z."/>
            <person name="Ringwald M."/>
            <person name="Rost B."/>
            <person name="Ruan Y."/>
            <person name="Salzberg S.L."/>
            <person name="Sandelin A."/>
            <person name="Schneider C."/>
            <person name="Schoenbach C."/>
            <person name="Sekiguchi K."/>
            <person name="Semple C.A."/>
            <person name="Seno S."/>
            <person name="Sessa L."/>
            <person name="Sheng Y."/>
            <person name="Shibata Y."/>
            <person name="Shimada H."/>
            <person name="Shimada K."/>
            <person name="Silva D."/>
            <person name="Sinclair B."/>
            <person name="Sperling S."/>
            <person name="Stupka E."/>
            <person name="Sugiura K."/>
            <person name="Sultana R."/>
            <person name="Takenaka Y."/>
            <person name="Taki K."/>
            <person name="Tammoja K."/>
            <person name="Tan S.L."/>
            <person name="Tang S."/>
            <person name="Taylor M.S."/>
            <person name="Tegner J."/>
            <person name="Teichmann S.A."/>
            <person name="Ueda H.R."/>
            <person name="van Nimwegen E."/>
            <person name="Verardo R."/>
            <person name="Wei C.L."/>
            <person name="Yagi K."/>
            <person name="Yamanishi H."/>
            <person name="Zabarovsky E."/>
            <person name="Zhu S."/>
            <person name="Zimmer A."/>
            <person name="Hide W."/>
            <person name="Bult C."/>
            <person name="Grimmond S.M."/>
            <person name="Teasdale R.D."/>
            <person name="Liu E.T."/>
            <person name="Brusic V."/>
            <person name="Quackenbush J."/>
            <person name="Wahlestedt C."/>
            <person name="Mattick J.S."/>
            <person name="Hume D.A."/>
            <person name="Kai C."/>
            <person name="Sasaki D."/>
            <person name="Tomaru Y."/>
            <person name="Fukuda S."/>
            <person name="Kanamori-Katayama M."/>
            <person name="Suzuki M."/>
            <person name="Aoki J."/>
            <person name="Arakawa T."/>
            <person name="Iida J."/>
            <person name="Imamura K."/>
            <person name="Itoh M."/>
            <person name="Kato T."/>
            <person name="Kawaji H."/>
            <person name="Kawagashira N."/>
            <person name="Kawashima T."/>
            <person name="Kojima M."/>
            <person name="Kondo S."/>
            <person name="Konno H."/>
            <person name="Nakano K."/>
            <person name="Ninomiya N."/>
            <person name="Nishio T."/>
            <person name="Okada M."/>
            <person name="Plessy C."/>
            <person name="Shibata K."/>
            <person name="Shiraki T."/>
            <person name="Suzuki S."/>
            <person name="Tagami M."/>
            <person name="Waki K."/>
            <person name="Watahiki A."/>
            <person name="Okamura-Oho Y."/>
            <person name="Suzuki H."/>
            <person name="Kawai J."/>
            <person name="Hayashizaki Y."/>
        </authorList>
    </citation>
    <scope>NUCLEOTIDE SEQUENCE [LARGE SCALE MRNA]</scope>
    <source>
        <strain>C57BL/6J</strain>
        <tissue>Testis</tissue>
    </source>
</reference>
<reference key="3">
    <citation type="journal article" date="2004" name="Genome Res.">
        <title>The status, quality, and expansion of the NIH full-length cDNA project: the Mammalian Gene Collection (MGC).</title>
        <authorList>
            <consortium name="The MGC Project Team"/>
        </authorList>
    </citation>
    <scope>NUCLEOTIDE SEQUENCE [LARGE SCALE MRNA]</scope>
    <source>
        <tissue>Eye</tissue>
    </source>
</reference>
<reference key="4">
    <citation type="submission" date="2009-01" db="UniProtKB">
        <authorList>
            <person name="Lubec G."/>
            <person name="Kang S.U."/>
            <person name="Sunyer B."/>
            <person name="Chen W.-Q."/>
        </authorList>
    </citation>
    <scope>PROTEIN SEQUENCE OF 183-189; 201-233; 245-260; 273-281; 289-297; 302-313; 333-366 AND 376-388</scope>
    <scope>IDENTIFICATION BY MASS SPECTROMETRY</scope>
    <source>
        <strain>C57BL/6J</strain>
        <strain>OF1</strain>
        <tissue>Brain</tissue>
        <tissue>Hippocampus</tissue>
    </source>
</reference>
<reference key="5">
    <citation type="journal article" date="2001" name="Nature">
        <title>Synaptotagmin I functions as a calcium regulator of release probability.</title>
        <authorList>
            <person name="Fernandez-Chacon R."/>
            <person name="Koenigstorfer A."/>
            <person name="Gerber S.H."/>
            <person name="Garcia J."/>
            <person name="Matos M.F."/>
            <person name="Stevens C.F."/>
            <person name="Brose N."/>
            <person name="Rizo J."/>
            <person name="Rosenmund C."/>
            <person name="Suedhof T.C."/>
        </authorList>
    </citation>
    <scope>FUNCTION</scope>
    <scope>COFACTOR</scope>
    <scope>MUTAGENESIS OF ARG-233 AND LYS-236</scope>
</reference>
<reference key="6">
    <citation type="journal article" date="2004" name="J. Biol. Chem.">
        <title>SV2B regulates synaptotagmin 1 by direct interaction.</title>
        <authorList>
            <person name="Lazzell D.R."/>
            <person name="Belizaire R."/>
            <person name="Thakur P."/>
            <person name="Sherry D.M."/>
            <person name="Janz R."/>
        </authorList>
    </citation>
    <scope>INTERACTION WITH SV2B; SYNTAXIN-1 AND SNAP25</scope>
</reference>
<reference key="7">
    <citation type="journal article" date="2007" name="J. Cell Biol.">
        <title>Synaptotagmin-12, a synaptic vesicle phosphoprotein that modulates spontaneous neurotransmitter release.</title>
        <authorList>
            <person name="Maximov A."/>
            <person name="Shin O.H."/>
            <person name="Liu X."/>
            <person name="Suedhof T.C."/>
        </authorList>
    </citation>
    <scope>TISSUE SPECIFICITY</scope>
    <scope>DEVELOPMENTAL STAGE</scope>
</reference>
<reference key="8">
    <citation type="journal article" date="2008" name="J. Proteome Res.">
        <title>Large-scale identification and evolution indexing of tyrosine phosphorylation sites from murine brain.</title>
        <authorList>
            <person name="Ballif B.A."/>
            <person name="Carey G.R."/>
            <person name="Sunyaev S.R."/>
            <person name="Gygi S.P."/>
        </authorList>
    </citation>
    <scope>PHOSPHORYLATION [LARGE SCALE ANALYSIS] AT TYR-229</scope>
    <scope>IDENTIFICATION BY MASS SPECTROMETRY [LARGE SCALE ANALYSIS]</scope>
    <source>
        <tissue>Brain</tissue>
    </source>
</reference>
<reference key="9">
    <citation type="journal article" date="2010" name="Cell">
        <title>A tissue-specific atlas of mouse protein phosphorylation and expression.</title>
        <authorList>
            <person name="Huttlin E.L."/>
            <person name="Jedrychowski M.P."/>
            <person name="Elias J.E."/>
            <person name="Goswami T."/>
            <person name="Rad R."/>
            <person name="Beausoleil S.A."/>
            <person name="Villen J."/>
            <person name="Haas W."/>
            <person name="Sowa M.E."/>
            <person name="Gygi S.P."/>
        </authorList>
    </citation>
    <scope>PHOSPHORYLATION [LARGE SCALE ANALYSIS] AT SER-264</scope>
    <scope>IDENTIFICATION BY MASS SPECTROMETRY [LARGE SCALE ANALYSIS]</scope>
    <source>
        <tissue>Brain</tissue>
        <tissue>Brown adipose tissue</tissue>
        <tissue>Liver</tissue>
    </source>
</reference>
<reference key="10">
    <citation type="journal article" date="2011" name="Cell">
        <title>Activity-dependent IGF-1 exocytosis is controlled by the Ca(2+)-sensor synaptotagmin-10.</title>
        <authorList>
            <person name="Cao P."/>
            <person name="Maximov A."/>
            <person name="Suedhof T.C."/>
        </authorList>
    </citation>
    <scope>FUNCTION</scope>
</reference>
<reference key="11">
    <citation type="journal article" date="2013" name="J. Neurosci.">
        <title>Complexin activates exocytosis of distinct secretory vesicles controlled by different synaptotagmins.</title>
        <authorList>
            <person name="Cao P."/>
            <person name="Yang X."/>
            <person name="Suedhof T.C."/>
        </authorList>
    </citation>
    <scope>SUBCELLULAR LOCATION</scope>
</reference>
<reference key="12">
    <citation type="journal article" date="2016" name="Cell Rep.">
        <title>PRRT2 Is a Key Component of the Ca(2+)-Dependent Neurotransmitter Release Machinery.</title>
        <authorList>
            <person name="Valente P."/>
            <person name="Castroflorio E."/>
            <person name="Rossi P."/>
            <person name="Fadda M."/>
            <person name="Sterlini B."/>
            <person name="Cervigni R.I."/>
            <person name="Prestigio C."/>
            <person name="Giovedi S."/>
            <person name="Onofri F."/>
            <person name="Mura E."/>
            <person name="Guarnieri F.C."/>
            <person name="Marte A."/>
            <person name="Orlando M."/>
            <person name="Zara F."/>
            <person name="Fassio A."/>
            <person name="Valtorta F."/>
            <person name="Baldelli P."/>
            <person name="Corradi A."/>
            <person name="Benfenati F."/>
        </authorList>
    </citation>
    <scope>INTERACTION WITH PRRT2</scope>
</reference>
<comment type="function">
    <text evidence="2 8 13">Calcium sensor that participates in triggering neurotransmitter release at the synapse (PubMed:11242035). May have a regulatory role in the membrane interactions during trafficking of synaptic vesicles at the active zone of the synapse (PubMed:7961887). It binds acidic phospholipids with a specificity that requires the presence of both an acidic head group and a diacyl backbone. A Ca(2+)-dependent interaction between synaptotagmin and putative receptors for activated protein kinase C has also been reported. It can bind to at least three additional proteins in a Ca(2+)-independent manner; these are neurexins, syntaxin and AP2. Plays a role in dendrite formation by melanocytes (By similarity).</text>
</comment>
<comment type="cofactor">
    <cofactor evidence="6 8">
        <name>Ca(2+)</name>
        <dbReference type="ChEBI" id="CHEBI:29108"/>
    </cofactor>
    <text evidence="3">Binds 3 Ca(2+) ions per subunit. The ions are bound to the C2 domains.</text>
</comment>
<comment type="subunit">
    <text evidence="2 3 4 9 12 15">Homotetramer (Probable). Heterodimer; heterodimerizes with SYT2 in presence of calcium (By similarity). Interacts with SCAMP5 (By similarity). Interacts with STON2 (By similarity). Forms a complex with SV2B, syntaxin 1 and SNAP25 (PubMed:15466855). Interacts with SV2A, SV2B and SV2C (By similarity). Interacts with RIMS1 (By similarity). Interacts with PRRT2 (PubMed:27052163). Interacts with DNAJC5 in a phosphorylation-dependent manner (By similarity). Interacts (via N-terminus) with RAB3A (By similarity). Interacts with SYT12 (By similarity). Interacts with calmodulin (By similarity). Interacts with DNM1 (via C-terminal proline-rich domain (PRD)); this interaction facilitates vesicle fission during clathrin-mediated endocytosis (CME) (By similarity).</text>
</comment>
<comment type="interaction">
    <interactant intactId="EBI-445340">
        <id>P46096</id>
    </interactant>
    <interactant intactId="EBI-990067">
        <id>P49769</id>
        <label>Psen1</label>
    </interactant>
    <organismsDiffer>false</organismsDiffer>
    <experiments>6</experiments>
</comment>
<comment type="interaction">
    <interactant intactId="EBI-445340">
        <id>P46096</id>
    </interactant>
    <interactant intactId="EBI-2695784">
        <id>Q8TAC9</id>
        <label>SCAMP5</label>
    </interactant>
    <organismsDiffer>true</organismsDiffer>
    <experiments>2</experiments>
</comment>
<comment type="subcellular location">
    <subcellularLocation>
        <location evidence="3">Cytoplasmic vesicle</location>
        <location evidence="3">Secretory vesicle membrane</location>
        <topology evidence="5">Single-pass membrane protein</topology>
    </subcellularLocation>
    <subcellularLocation>
        <location evidence="11">Cytoplasmic vesicle</location>
        <location evidence="11">Secretory vesicle</location>
        <location evidence="11">Synaptic vesicle membrane</location>
        <topology evidence="5">Single-pass membrane protein</topology>
    </subcellularLocation>
    <subcellularLocation>
        <location evidence="3">Cytoplasmic vesicle</location>
        <location evidence="3">Secretory vesicle</location>
        <location evidence="3">Chromaffin granule membrane</location>
        <topology evidence="3">Single-pass membrane protein</topology>
    </subcellularLocation>
    <subcellularLocation>
        <location evidence="3">Cytoplasm</location>
    </subcellularLocation>
</comment>
<comment type="tissue specificity">
    <text evidence="10">Expressed in the brain and adrenal medulla (at protein level).</text>
</comment>
<comment type="developmental stage">
    <text evidence="10">Detected in the brain at 18 days post coitum (dpc) (at protein level). Expression increases after birth, with expression increasing till adulthood.</text>
</comment>
<comment type="domain">
    <text evidence="3">The first C2 domain mediates Ca(2+)-dependent phospholipid binding.</text>
</comment>
<comment type="domain">
    <text evidence="3">The second C2 domain mediates interaction with SV2A and probably with STN2.</text>
</comment>
<comment type="PTM">
    <text evidence="3">Glycosylated.</text>
</comment>
<comment type="similarity">
    <text evidence="15">Belongs to the synaptotagmin family.</text>
</comment>